<dbReference type="EMBL" id="X68352">
    <property type="protein sequence ID" value="CAA48418.1"/>
    <property type="molecule type" value="Genomic_DNA"/>
</dbReference>
<dbReference type="EMBL" id="X68353">
    <property type="protein sequence ID" value="CAA48418.1"/>
    <property type="status" value="JOINED"/>
    <property type="molecule type" value="Genomic_DNA"/>
</dbReference>
<dbReference type="PIR" id="A60096">
    <property type="entry name" value="A60096"/>
</dbReference>
<dbReference type="SMR" id="P31259"/>
<dbReference type="FunCoup" id="P31259">
    <property type="interactions" value="92"/>
</dbReference>
<dbReference type="PaxDb" id="9031-ENSGALP00000021895"/>
<dbReference type="VEuPathDB" id="HostDB:geneid_395900"/>
<dbReference type="eggNOG" id="KOG0489">
    <property type="taxonomic scope" value="Eukaryota"/>
</dbReference>
<dbReference type="InParanoid" id="P31259"/>
<dbReference type="OrthoDB" id="6159439at2759"/>
<dbReference type="PhylomeDB" id="P31259"/>
<dbReference type="Proteomes" id="UP000000539">
    <property type="component" value="Unassembled WGS sequence"/>
</dbReference>
<dbReference type="GO" id="GO:0005634">
    <property type="term" value="C:nucleus"/>
    <property type="evidence" value="ECO:0000318"/>
    <property type="project" value="GO_Central"/>
</dbReference>
<dbReference type="GO" id="GO:0000981">
    <property type="term" value="F:DNA-binding transcription factor activity, RNA polymerase II-specific"/>
    <property type="evidence" value="ECO:0000318"/>
    <property type="project" value="GO_Central"/>
</dbReference>
<dbReference type="GO" id="GO:0000978">
    <property type="term" value="F:RNA polymerase II cis-regulatory region sequence-specific DNA binding"/>
    <property type="evidence" value="ECO:0000318"/>
    <property type="project" value="GO_Central"/>
</dbReference>
<dbReference type="GO" id="GO:0006357">
    <property type="term" value="P:regulation of transcription by RNA polymerase II"/>
    <property type="evidence" value="ECO:0000318"/>
    <property type="project" value="GO_Central"/>
</dbReference>
<dbReference type="CDD" id="cd00086">
    <property type="entry name" value="homeodomain"/>
    <property type="match status" value="1"/>
</dbReference>
<dbReference type="FunFam" id="1.10.10.60:FF:000113">
    <property type="entry name" value="homeobox protein Hox-B1"/>
    <property type="match status" value="1"/>
</dbReference>
<dbReference type="Gene3D" id="1.10.10.60">
    <property type="entry name" value="Homeodomain-like"/>
    <property type="match status" value="1"/>
</dbReference>
<dbReference type="InterPro" id="IPR001356">
    <property type="entry name" value="HD"/>
</dbReference>
<dbReference type="InterPro" id="IPR020479">
    <property type="entry name" value="HD_metazoa"/>
</dbReference>
<dbReference type="InterPro" id="IPR017970">
    <property type="entry name" value="Homeobox_CS"/>
</dbReference>
<dbReference type="InterPro" id="IPR009057">
    <property type="entry name" value="Homeodomain-like_sf"/>
</dbReference>
<dbReference type="InterPro" id="IPR046327">
    <property type="entry name" value="HXA1/B1/D1"/>
</dbReference>
<dbReference type="PANTHER" id="PTHR45946:SF5">
    <property type="entry name" value="HOMEOBOX PROTEIN HOX-B1"/>
    <property type="match status" value="1"/>
</dbReference>
<dbReference type="PANTHER" id="PTHR45946">
    <property type="entry name" value="HOMEOBOX PROTEIN ROUGH-RELATED"/>
    <property type="match status" value="1"/>
</dbReference>
<dbReference type="Pfam" id="PF00046">
    <property type="entry name" value="Homeodomain"/>
    <property type="match status" value="1"/>
</dbReference>
<dbReference type="PRINTS" id="PR00024">
    <property type="entry name" value="HOMEOBOX"/>
</dbReference>
<dbReference type="SMART" id="SM00389">
    <property type="entry name" value="HOX"/>
    <property type="match status" value="1"/>
</dbReference>
<dbReference type="SUPFAM" id="SSF46689">
    <property type="entry name" value="Homeodomain-like"/>
    <property type="match status" value="1"/>
</dbReference>
<dbReference type="PROSITE" id="PS00027">
    <property type="entry name" value="HOMEOBOX_1"/>
    <property type="match status" value="1"/>
</dbReference>
<dbReference type="PROSITE" id="PS50071">
    <property type="entry name" value="HOMEOBOX_2"/>
    <property type="match status" value="1"/>
</dbReference>
<sequence>MDNTRMNSFLEYAICNRGTGAYHHLEQSSPSFPSCSGSPSSDTFHGEGAYGAGGSPVAAAHLPPQSPGFFPAPPGAPSLRGRCPERRVPNPKLQPRLRHHQLYLGQQDADAVYFQAAGYSSSTGPHLGSLAEGYCGAVGQYQQQQHLYGQEQPSYLPGVYGNLSPSLNEDKDPACPSEPCPNASRARTFDWMKVKRNPPKTAKVSEYGLLGQPNTIRTNFTTKQLTELEKEFHFNKYLTRARRVEIAATLELNETQVKIWFQNRRMKQKKREKEGLAPPAASRSAKEASEASDQSNCTSPEASPSSVSS</sequence>
<proteinExistence type="inferred from homology"/>
<feature type="chain" id="PRO_0000200109" description="Homeobox protein Hox-B1">
    <location>
        <begin position="1"/>
        <end position="309"/>
    </location>
</feature>
<feature type="DNA-binding region" description="Homeobox" evidence="1">
    <location>
        <begin position="213"/>
        <end position="272"/>
    </location>
</feature>
<feature type="region of interest" description="Disordered" evidence="2">
    <location>
        <begin position="28"/>
        <end position="50"/>
    </location>
</feature>
<feature type="region of interest" description="Disordered" evidence="2">
    <location>
        <begin position="264"/>
        <end position="309"/>
    </location>
</feature>
<feature type="short sequence motif" description="Antp-type hexapeptide">
    <location>
        <begin position="188"/>
        <end position="193"/>
    </location>
</feature>
<feature type="compositionally biased region" description="Low complexity" evidence="2">
    <location>
        <begin position="28"/>
        <end position="41"/>
    </location>
</feature>
<feature type="compositionally biased region" description="Low complexity" evidence="2">
    <location>
        <begin position="299"/>
        <end position="309"/>
    </location>
</feature>
<accession>P31259</accession>
<name>HXB1_CHICK</name>
<reference key="1">
    <citation type="journal article" date="1990" name="Development">
        <title>Region-specific expression in early chick and mouse embryos of Ghox-lab and Hox 1.6, vertebrate homeobox-containing genes related to Drosophila labial.</title>
        <authorList>
            <person name="Sundin O.H."/>
            <person name="Busse H.G."/>
            <person name="Rogers M.B."/>
            <person name="Gudas L.J."/>
            <person name="Eichele G."/>
        </authorList>
    </citation>
    <scope>NUCLEOTIDE SEQUENCE [GENOMIC DNA]</scope>
</reference>
<comment type="function">
    <text>Sequence-specific transcription factor which is part of a developmental regulatory system that provides cells with specific positional identities on the anterior-posterior axis. Acts on the anterior body structures.</text>
</comment>
<comment type="subcellular location">
    <subcellularLocation>
        <location>Nucleus</location>
    </subcellularLocation>
</comment>
<comment type="similarity">
    <text evidence="3">Belongs to the Antp homeobox family. Labial subfamily.</text>
</comment>
<gene>
    <name type="primary">HOXB1</name>
    <name type="synonym">GHOX-LAB</name>
</gene>
<organism>
    <name type="scientific">Gallus gallus</name>
    <name type="common">Chicken</name>
    <dbReference type="NCBI Taxonomy" id="9031"/>
    <lineage>
        <taxon>Eukaryota</taxon>
        <taxon>Metazoa</taxon>
        <taxon>Chordata</taxon>
        <taxon>Craniata</taxon>
        <taxon>Vertebrata</taxon>
        <taxon>Euteleostomi</taxon>
        <taxon>Archelosauria</taxon>
        <taxon>Archosauria</taxon>
        <taxon>Dinosauria</taxon>
        <taxon>Saurischia</taxon>
        <taxon>Theropoda</taxon>
        <taxon>Coelurosauria</taxon>
        <taxon>Aves</taxon>
        <taxon>Neognathae</taxon>
        <taxon>Galloanserae</taxon>
        <taxon>Galliformes</taxon>
        <taxon>Phasianidae</taxon>
        <taxon>Phasianinae</taxon>
        <taxon>Gallus</taxon>
    </lineage>
</organism>
<evidence type="ECO:0000255" key="1">
    <source>
        <dbReference type="PROSITE-ProRule" id="PRU00108"/>
    </source>
</evidence>
<evidence type="ECO:0000256" key="2">
    <source>
        <dbReference type="SAM" id="MobiDB-lite"/>
    </source>
</evidence>
<evidence type="ECO:0000305" key="3"/>
<protein>
    <recommendedName>
        <fullName>Homeobox protein Hox-B1</fullName>
    </recommendedName>
    <alternativeName>
        <fullName>Ghox-lab</fullName>
    </alternativeName>
</protein>
<keyword id="KW-0217">Developmental protein</keyword>
<keyword id="KW-0238">DNA-binding</keyword>
<keyword id="KW-0371">Homeobox</keyword>
<keyword id="KW-0539">Nucleus</keyword>
<keyword id="KW-1185">Reference proteome</keyword>
<keyword id="KW-0804">Transcription</keyword>
<keyword id="KW-0805">Transcription regulation</keyword>